<reference key="1">
    <citation type="journal article" date="2010" name="PLoS ONE">
        <title>The complete genome sequence of Cupriavidus metallidurans strain CH34, a master survivalist in harsh and anthropogenic environments.</title>
        <authorList>
            <person name="Janssen P.J."/>
            <person name="Van Houdt R."/>
            <person name="Moors H."/>
            <person name="Monsieurs P."/>
            <person name="Morin N."/>
            <person name="Michaux A."/>
            <person name="Benotmane M.A."/>
            <person name="Leys N."/>
            <person name="Vallaeys T."/>
            <person name="Lapidus A."/>
            <person name="Monchy S."/>
            <person name="Medigue C."/>
            <person name="Taghavi S."/>
            <person name="McCorkle S."/>
            <person name="Dunn J."/>
            <person name="van der Lelie D."/>
            <person name="Mergeay M."/>
        </authorList>
    </citation>
    <scope>NUCLEOTIDE SEQUENCE [LARGE SCALE GENOMIC DNA]</scope>
    <source>
        <strain>ATCC 43123 / DSM 2839 / NBRC 102507 / CH34</strain>
    </source>
</reference>
<feature type="chain" id="PRO_0000316721" description="Putative phosphoenolpyruvate synthase regulatory protein">
    <location>
        <begin position="1"/>
        <end position="270"/>
    </location>
</feature>
<feature type="binding site" evidence="1">
    <location>
        <begin position="150"/>
        <end position="157"/>
    </location>
    <ligand>
        <name>ADP</name>
        <dbReference type="ChEBI" id="CHEBI:456216"/>
    </ligand>
</feature>
<accession>Q1LNE1</accession>
<dbReference type="EC" id="2.7.11.33" evidence="1"/>
<dbReference type="EC" id="2.7.4.28" evidence="1"/>
<dbReference type="EMBL" id="CP000352">
    <property type="protein sequence ID" value="ABF08335.1"/>
    <property type="molecule type" value="Genomic_DNA"/>
</dbReference>
<dbReference type="SMR" id="Q1LNE1"/>
<dbReference type="STRING" id="266264.Rmet_1452"/>
<dbReference type="KEGG" id="rme:Rmet_1452"/>
<dbReference type="eggNOG" id="COG1806">
    <property type="taxonomic scope" value="Bacteria"/>
</dbReference>
<dbReference type="HOGENOM" id="CLU_046206_1_0_4"/>
<dbReference type="Proteomes" id="UP000002429">
    <property type="component" value="Chromosome"/>
</dbReference>
<dbReference type="GO" id="GO:0043531">
    <property type="term" value="F:ADP binding"/>
    <property type="evidence" value="ECO:0007669"/>
    <property type="project" value="UniProtKB-UniRule"/>
</dbReference>
<dbReference type="GO" id="GO:0005524">
    <property type="term" value="F:ATP binding"/>
    <property type="evidence" value="ECO:0007669"/>
    <property type="project" value="InterPro"/>
</dbReference>
<dbReference type="GO" id="GO:0016776">
    <property type="term" value="F:phosphotransferase activity, phosphate group as acceptor"/>
    <property type="evidence" value="ECO:0007669"/>
    <property type="project" value="UniProtKB-UniRule"/>
</dbReference>
<dbReference type="GO" id="GO:0004674">
    <property type="term" value="F:protein serine/threonine kinase activity"/>
    <property type="evidence" value="ECO:0007669"/>
    <property type="project" value="UniProtKB-UniRule"/>
</dbReference>
<dbReference type="HAMAP" id="MF_01062">
    <property type="entry name" value="PSRP"/>
    <property type="match status" value="1"/>
</dbReference>
<dbReference type="InterPro" id="IPR005177">
    <property type="entry name" value="Kinase-pyrophosphorylase"/>
</dbReference>
<dbReference type="InterPro" id="IPR026530">
    <property type="entry name" value="PSRP"/>
</dbReference>
<dbReference type="NCBIfam" id="NF003742">
    <property type="entry name" value="PRK05339.1"/>
    <property type="match status" value="1"/>
</dbReference>
<dbReference type="PANTHER" id="PTHR31756">
    <property type="entry name" value="PYRUVATE, PHOSPHATE DIKINASE REGULATORY PROTEIN 1, CHLOROPLASTIC"/>
    <property type="match status" value="1"/>
</dbReference>
<dbReference type="PANTHER" id="PTHR31756:SF3">
    <property type="entry name" value="PYRUVATE, PHOSPHATE DIKINASE REGULATORY PROTEIN 1, CHLOROPLASTIC"/>
    <property type="match status" value="1"/>
</dbReference>
<dbReference type="Pfam" id="PF03618">
    <property type="entry name" value="Kinase-PPPase"/>
    <property type="match status" value="1"/>
</dbReference>
<organism>
    <name type="scientific">Cupriavidus metallidurans (strain ATCC 43123 / DSM 2839 / NBRC 102507 / CH34)</name>
    <name type="common">Ralstonia metallidurans</name>
    <dbReference type="NCBI Taxonomy" id="266264"/>
    <lineage>
        <taxon>Bacteria</taxon>
        <taxon>Pseudomonadati</taxon>
        <taxon>Pseudomonadota</taxon>
        <taxon>Betaproteobacteria</taxon>
        <taxon>Burkholderiales</taxon>
        <taxon>Burkholderiaceae</taxon>
        <taxon>Cupriavidus</taxon>
    </lineage>
</organism>
<evidence type="ECO:0000255" key="1">
    <source>
        <dbReference type="HAMAP-Rule" id="MF_01062"/>
    </source>
</evidence>
<sequence length="270" mass="30653">MRTVFIVSDGTGITAETFSHSILAQFEMRFRKVRMPFVDTPDKAHVAVGKINEAFYNEGVPPIVFTTLVNAESNKAIRRAKAMILDMFQTFIEPLEKELGLKSTHAIGRFHQNADTEAYKNRIEAINFSLAHDDGQSHKNLEDADVILVGVSRSGKTPTSLYLAMQYGLKAANYPLIPDDFERGRLPSALYAYKQKIFGLSIDPQRLTEIRNERRPGSKYAAVENCRYEVNEAESMMRREGIKWLSSTHKSIEEIATTILQEIKVDRDNY</sequence>
<comment type="function">
    <text evidence="1">Bifunctional serine/threonine kinase and phosphorylase involved in the regulation of the phosphoenolpyruvate synthase (PEPS) by catalyzing its phosphorylation/dephosphorylation.</text>
</comment>
<comment type="catalytic activity">
    <reaction evidence="1">
        <text>[pyruvate, water dikinase] + ADP = [pyruvate, water dikinase]-phosphate + AMP + H(+)</text>
        <dbReference type="Rhea" id="RHEA:46020"/>
        <dbReference type="Rhea" id="RHEA-COMP:11425"/>
        <dbReference type="Rhea" id="RHEA-COMP:11426"/>
        <dbReference type="ChEBI" id="CHEBI:15378"/>
        <dbReference type="ChEBI" id="CHEBI:43176"/>
        <dbReference type="ChEBI" id="CHEBI:68546"/>
        <dbReference type="ChEBI" id="CHEBI:456215"/>
        <dbReference type="ChEBI" id="CHEBI:456216"/>
        <dbReference type="EC" id="2.7.11.33"/>
    </reaction>
</comment>
<comment type="catalytic activity">
    <reaction evidence="1">
        <text>[pyruvate, water dikinase]-phosphate + phosphate + H(+) = [pyruvate, water dikinase] + diphosphate</text>
        <dbReference type="Rhea" id="RHEA:48580"/>
        <dbReference type="Rhea" id="RHEA-COMP:11425"/>
        <dbReference type="Rhea" id="RHEA-COMP:11426"/>
        <dbReference type="ChEBI" id="CHEBI:15378"/>
        <dbReference type="ChEBI" id="CHEBI:33019"/>
        <dbReference type="ChEBI" id="CHEBI:43176"/>
        <dbReference type="ChEBI" id="CHEBI:43474"/>
        <dbReference type="ChEBI" id="CHEBI:68546"/>
        <dbReference type="EC" id="2.7.4.28"/>
    </reaction>
</comment>
<comment type="similarity">
    <text evidence="1">Belongs to the pyruvate, phosphate/water dikinase regulatory protein family. PSRP subfamily.</text>
</comment>
<name>PSRP_CUPMC</name>
<protein>
    <recommendedName>
        <fullName evidence="1">Putative phosphoenolpyruvate synthase regulatory protein</fullName>
        <shortName evidence="1">PEP synthase regulatory protein</shortName>
        <shortName evidence="1">PSRP</shortName>
        <ecNumber evidence="1">2.7.11.33</ecNumber>
        <ecNumber evidence="1">2.7.4.28</ecNumber>
    </recommendedName>
    <alternativeName>
        <fullName evidence="1">Pyruvate, water dikinase regulatory protein</fullName>
    </alternativeName>
</protein>
<keyword id="KW-0418">Kinase</keyword>
<keyword id="KW-0547">Nucleotide-binding</keyword>
<keyword id="KW-1185">Reference proteome</keyword>
<keyword id="KW-0723">Serine/threonine-protein kinase</keyword>
<keyword id="KW-0808">Transferase</keyword>
<proteinExistence type="inferred from homology"/>
<gene>
    <name type="ordered locus">Rmet_1452</name>
</gene>